<protein>
    <recommendedName>
        <fullName evidence="1">2-keto-3-deoxy-L-rhamnonate aldolase</fullName>
        <shortName evidence="1">KDR aldolase</shortName>
        <ecNumber evidence="1">4.1.2.53</ecNumber>
    </recommendedName>
    <alternativeName>
        <fullName evidence="1">2-dehydro-3-deoxyrhamnonate aldolase</fullName>
    </alternativeName>
</protein>
<evidence type="ECO:0000255" key="1">
    <source>
        <dbReference type="HAMAP-Rule" id="MF_01290"/>
    </source>
</evidence>
<sequence length="267" mass="28911">MNALLTNPFKERLRKGEVQIGLWLSSTTAYMAEIAATSGYDWLLIDGEHAPNTIQDLYHQLQAVAPYASHPVIRPVEGSKPLIKQVLDIGAQTLLIPMVDTADQARQVVSATRYPPYGERGVGASVARAARWGRIENYMAQVNDSLCLLVQVESKTALDNLDEILDVEGIDGVFIGPADLSASLGYPDNAGHPEVQRIIETSIRRIRAAGKAAGFLAVAPDMAQQCLAWGANFVAVGVDTMLYSDALDQRLAMFKSGKNGPRVKGSY</sequence>
<accession>Q1R9H0</accession>
<dbReference type="EC" id="4.1.2.53" evidence="1"/>
<dbReference type="EMBL" id="CP000243">
    <property type="protein sequence ID" value="ABE07994.1"/>
    <property type="molecule type" value="Genomic_DNA"/>
</dbReference>
<dbReference type="SMR" id="Q1R9H0"/>
<dbReference type="KEGG" id="eci:UTI89_C2527"/>
<dbReference type="HOGENOM" id="CLU_059964_1_0_6"/>
<dbReference type="Proteomes" id="UP000001952">
    <property type="component" value="Chromosome"/>
</dbReference>
<dbReference type="GO" id="GO:0005737">
    <property type="term" value="C:cytoplasm"/>
    <property type="evidence" value="ECO:0007669"/>
    <property type="project" value="TreeGrafter"/>
</dbReference>
<dbReference type="GO" id="GO:0106099">
    <property type="term" value="F:2-keto-3-deoxy-L-rhamnonate aldolase activity"/>
    <property type="evidence" value="ECO:0007669"/>
    <property type="project" value="UniProtKB-EC"/>
</dbReference>
<dbReference type="GO" id="GO:0000287">
    <property type="term" value="F:magnesium ion binding"/>
    <property type="evidence" value="ECO:0007669"/>
    <property type="project" value="UniProtKB-UniRule"/>
</dbReference>
<dbReference type="FunFam" id="3.20.20.60:FF:000004">
    <property type="entry name" value="5-keto-4-deoxy-D-glucarate aldolase"/>
    <property type="match status" value="1"/>
</dbReference>
<dbReference type="Gene3D" id="3.20.20.60">
    <property type="entry name" value="Phosphoenolpyruvate-binding domains"/>
    <property type="match status" value="1"/>
</dbReference>
<dbReference type="HAMAP" id="MF_01290">
    <property type="entry name" value="KDR_aldolase"/>
    <property type="match status" value="1"/>
</dbReference>
<dbReference type="InterPro" id="IPR005000">
    <property type="entry name" value="Aldolase/citrate-lyase_domain"/>
</dbReference>
<dbReference type="InterPro" id="IPR050251">
    <property type="entry name" value="HpcH-HpaI_aldolase"/>
</dbReference>
<dbReference type="InterPro" id="IPR023593">
    <property type="entry name" value="KDR_aldolase"/>
</dbReference>
<dbReference type="InterPro" id="IPR015813">
    <property type="entry name" value="Pyrv/PenolPyrv_kinase-like_dom"/>
</dbReference>
<dbReference type="InterPro" id="IPR040442">
    <property type="entry name" value="Pyrv_kinase-like_dom_sf"/>
</dbReference>
<dbReference type="NCBIfam" id="NF007521">
    <property type="entry name" value="PRK10128.1"/>
    <property type="match status" value="1"/>
</dbReference>
<dbReference type="PANTHER" id="PTHR30502">
    <property type="entry name" value="2-KETO-3-DEOXY-L-RHAMNONATE ALDOLASE"/>
    <property type="match status" value="1"/>
</dbReference>
<dbReference type="PANTHER" id="PTHR30502:SF5">
    <property type="entry name" value="2-KETO-3-DEOXY-L-RHAMNONATE ALDOLASE"/>
    <property type="match status" value="1"/>
</dbReference>
<dbReference type="Pfam" id="PF03328">
    <property type="entry name" value="HpcH_HpaI"/>
    <property type="match status" value="1"/>
</dbReference>
<dbReference type="SUPFAM" id="SSF51621">
    <property type="entry name" value="Phosphoenolpyruvate/pyruvate domain"/>
    <property type="match status" value="1"/>
</dbReference>
<comment type="function">
    <text evidence="1">Catalyzes the reversible retro-aldol cleavage of 2-keto-3-deoxy-L-rhamnonate (KDR) to pyruvate and lactaldehyde.</text>
</comment>
<comment type="catalytic activity">
    <reaction evidence="1">
        <text>2-dehydro-3-deoxy-L-rhamnonate = (S)-lactaldehyde + pyruvate</text>
        <dbReference type="Rhea" id="RHEA:25784"/>
        <dbReference type="ChEBI" id="CHEBI:15361"/>
        <dbReference type="ChEBI" id="CHEBI:18041"/>
        <dbReference type="ChEBI" id="CHEBI:58371"/>
        <dbReference type="EC" id="4.1.2.53"/>
    </reaction>
</comment>
<comment type="cofactor">
    <cofactor evidence="1">
        <name>Mg(2+)</name>
        <dbReference type="ChEBI" id="CHEBI:18420"/>
    </cofactor>
    <text evidence="1">Binds 1 Mg(2+) ion per subunit.</text>
</comment>
<comment type="subunit">
    <text evidence="1">Homohexamer.</text>
</comment>
<comment type="similarity">
    <text evidence="1">Belongs to the HpcH/HpaI aldolase family. KDR aldolase subfamily.</text>
</comment>
<proteinExistence type="inferred from homology"/>
<feature type="chain" id="PRO_0000353171" description="2-keto-3-deoxy-L-rhamnonate aldolase">
    <location>
        <begin position="1"/>
        <end position="267"/>
    </location>
</feature>
<feature type="active site" description="Proton acceptor" evidence="1">
    <location>
        <position position="49"/>
    </location>
</feature>
<feature type="binding site" evidence="1">
    <location>
        <position position="151"/>
    </location>
    <ligand>
        <name>substrate</name>
    </ligand>
</feature>
<feature type="binding site" evidence="1">
    <location>
        <position position="153"/>
    </location>
    <ligand>
        <name>Mg(2+)</name>
        <dbReference type="ChEBI" id="CHEBI:18420"/>
    </ligand>
</feature>
<feature type="binding site" evidence="1">
    <location>
        <position position="178"/>
    </location>
    <ligand>
        <name>substrate</name>
    </ligand>
</feature>
<feature type="binding site" evidence="1">
    <location>
        <position position="179"/>
    </location>
    <ligand>
        <name>Mg(2+)</name>
        <dbReference type="ChEBI" id="CHEBI:18420"/>
    </ligand>
</feature>
<feature type="binding site" evidence="1">
    <location>
        <position position="179"/>
    </location>
    <ligand>
        <name>substrate</name>
    </ligand>
</feature>
<feature type="site" description="Transition state stabilizer" evidence="1">
    <location>
        <position position="74"/>
    </location>
</feature>
<feature type="site" description="Increases basicity of active site His" evidence="1">
    <location>
        <position position="88"/>
    </location>
</feature>
<keyword id="KW-0456">Lyase</keyword>
<keyword id="KW-0460">Magnesium</keyword>
<keyword id="KW-0479">Metal-binding</keyword>
<organism>
    <name type="scientific">Escherichia coli (strain UTI89 / UPEC)</name>
    <dbReference type="NCBI Taxonomy" id="364106"/>
    <lineage>
        <taxon>Bacteria</taxon>
        <taxon>Pseudomonadati</taxon>
        <taxon>Pseudomonadota</taxon>
        <taxon>Gammaproteobacteria</taxon>
        <taxon>Enterobacterales</taxon>
        <taxon>Enterobacteriaceae</taxon>
        <taxon>Escherichia</taxon>
    </lineage>
</organism>
<gene>
    <name evidence="1" type="primary">rhmA</name>
    <name type="ordered locus">UTI89_C2527</name>
</gene>
<name>RHMA_ECOUT</name>
<reference key="1">
    <citation type="journal article" date="2006" name="Proc. Natl. Acad. Sci. U.S.A.">
        <title>Identification of genes subject to positive selection in uropathogenic strains of Escherichia coli: a comparative genomics approach.</title>
        <authorList>
            <person name="Chen S.L."/>
            <person name="Hung C.-S."/>
            <person name="Xu J."/>
            <person name="Reigstad C.S."/>
            <person name="Magrini V."/>
            <person name="Sabo A."/>
            <person name="Blasiar D."/>
            <person name="Bieri T."/>
            <person name="Meyer R.R."/>
            <person name="Ozersky P."/>
            <person name="Armstrong J.R."/>
            <person name="Fulton R.S."/>
            <person name="Latreille J.P."/>
            <person name="Spieth J."/>
            <person name="Hooton T.M."/>
            <person name="Mardis E.R."/>
            <person name="Hultgren S.J."/>
            <person name="Gordon J.I."/>
        </authorList>
    </citation>
    <scope>NUCLEOTIDE SEQUENCE [LARGE SCALE GENOMIC DNA]</scope>
    <source>
        <strain>UTI89 / UPEC</strain>
    </source>
</reference>